<evidence type="ECO:0000255" key="1">
    <source>
        <dbReference type="HAMAP-Rule" id="MF_00514"/>
    </source>
</evidence>
<evidence type="ECO:0000305" key="2"/>
<sequence length="65" mass="7395">MPKIKTNRAAAKRFKKTGSGKYKFRKANASHILTKKTTKRKRSLRLDQIIGASDLKEVKRLLPNG</sequence>
<comment type="similarity">
    <text evidence="1">Belongs to the bacterial ribosomal protein bL35 family.</text>
</comment>
<dbReference type="EMBL" id="CP001087">
    <property type="protein sequence ID" value="ACN13574.1"/>
    <property type="molecule type" value="Genomic_DNA"/>
</dbReference>
<dbReference type="RefSeq" id="WP_012662823.1">
    <property type="nucleotide sequence ID" value="NC_012108.1"/>
</dbReference>
<dbReference type="SMR" id="C0QHL6"/>
<dbReference type="STRING" id="177437.HRM2_04590"/>
<dbReference type="KEGG" id="dat:HRM2_04590"/>
<dbReference type="eggNOG" id="COG0291">
    <property type="taxonomic scope" value="Bacteria"/>
</dbReference>
<dbReference type="HOGENOM" id="CLU_169643_4_3_7"/>
<dbReference type="OrthoDB" id="9804851at2"/>
<dbReference type="Proteomes" id="UP000000442">
    <property type="component" value="Chromosome"/>
</dbReference>
<dbReference type="GO" id="GO:0022625">
    <property type="term" value="C:cytosolic large ribosomal subunit"/>
    <property type="evidence" value="ECO:0007669"/>
    <property type="project" value="TreeGrafter"/>
</dbReference>
<dbReference type="GO" id="GO:0003735">
    <property type="term" value="F:structural constituent of ribosome"/>
    <property type="evidence" value="ECO:0007669"/>
    <property type="project" value="InterPro"/>
</dbReference>
<dbReference type="GO" id="GO:0006412">
    <property type="term" value="P:translation"/>
    <property type="evidence" value="ECO:0007669"/>
    <property type="project" value="UniProtKB-UniRule"/>
</dbReference>
<dbReference type="FunFam" id="4.10.410.60:FF:000001">
    <property type="entry name" value="50S ribosomal protein L35"/>
    <property type="match status" value="1"/>
</dbReference>
<dbReference type="Gene3D" id="4.10.410.60">
    <property type="match status" value="1"/>
</dbReference>
<dbReference type="HAMAP" id="MF_00514">
    <property type="entry name" value="Ribosomal_bL35"/>
    <property type="match status" value="1"/>
</dbReference>
<dbReference type="InterPro" id="IPR001706">
    <property type="entry name" value="Ribosomal_bL35"/>
</dbReference>
<dbReference type="InterPro" id="IPR021137">
    <property type="entry name" value="Ribosomal_bL35-like"/>
</dbReference>
<dbReference type="InterPro" id="IPR018265">
    <property type="entry name" value="Ribosomal_bL35_CS"/>
</dbReference>
<dbReference type="InterPro" id="IPR037229">
    <property type="entry name" value="Ribosomal_bL35_sf"/>
</dbReference>
<dbReference type="NCBIfam" id="TIGR00001">
    <property type="entry name" value="rpmI_bact"/>
    <property type="match status" value="1"/>
</dbReference>
<dbReference type="PANTHER" id="PTHR33343">
    <property type="entry name" value="54S RIBOSOMAL PROTEIN BL35M"/>
    <property type="match status" value="1"/>
</dbReference>
<dbReference type="PANTHER" id="PTHR33343:SF1">
    <property type="entry name" value="LARGE RIBOSOMAL SUBUNIT PROTEIN BL35M"/>
    <property type="match status" value="1"/>
</dbReference>
<dbReference type="Pfam" id="PF01632">
    <property type="entry name" value="Ribosomal_L35p"/>
    <property type="match status" value="1"/>
</dbReference>
<dbReference type="PRINTS" id="PR00064">
    <property type="entry name" value="RIBOSOMALL35"/>
</dbReference>
<dbReference type="SUPFAM" id="SSF143034">
    <property type="entry name" value="L35p-like"/>
    <property type="match status" value="1"/>
</dbReference>
<dbReference type="PROSITE" id="PS00936">
    <property type="entry name" value="RIBOSOMAL_L35"/>
    <property type="match status" value="1"/>
</dbReference>
<reference key="1">
    <citation type="journal article" date="2009" name="Environ. Microbiol.">
        <title>Genome sequence of Desulfobacterium autotrophicum HRM2, a marine sulfate reducer oxidizing organic carbon completely to carbon dioxide.</title>
        <authorList>
            <person name="Strittmatter A.W."/>
            <person name="Liesegang H."/>
            <person name="Rabus R."/>
            <person name="Decker I."/>
            <person name="Amann J."/>
            <person name="Andres S."/>
            <person name="Henne A."/>
            <person name="Fricke W.F."/>
            <person name="Martinez-Arias R."/>
            <person name="Bartels D."/>
            <person name="Goesmann A."/>
            <person name="Krause L."/>
            <person name="Puehler A."/>
            <person name="Klenk H.P."/>
            <person name="Richter M."/>
            <person name="Schuler M."/>
            <person name="Gloeckner F.O."/>
            <person name="Meyerdierks A."/>
            <person name="Gottschalk G."/>
            <person name="Amann R."/>
        </authorList>
    </citation>
    <scope>NUCLEOTIDE SEQUENCE [LARGE SCALE GENOMIC DNA]</scope>
    <source>
        <strain>ATCC 43914 / DSM 3382 / VKM B-1955 / HRM2</strain>
    </source>
</reference>
<keyword id="KW-1185">Reference proteome</keyword>
<keyword id="KW-0687">Ribonucleoprotein</keyword>
<keyword id="KW-0689">Ribosomal protein</keyword>
<protein>
    <recommendedName>
        <fullName evidence="1">Large ribosomal subunit protein bL35</fullName>
    </recommendedName>
    <alternativeName>
        <fullName evidence="2">50S ribosomal protein L35</fullName>
    </alternativeName>
</protein>
<name>RL35_DESAH</name>
<gene>
    <name evidence="1" type="primary">rpmI</name>
    <name type="ordered locus">HRM2_04590</name>
</gene>
<accession>C0QHL6</accession>
<feature type="chain" id="PRO_1000211698" description="Large ribosomal subunit protein bL35">
    <location>
        <begin position="1"/>
        <end position="65"/>
    </location>
</feature>
<proteinExistence type="inferred from homology"/>
<organism>
    <name type="scientific">Desulforapulum autotrophicum (strain ATCC 43914 / DSM 3382 / VKM B-1955 / HRM2)</name>
    <name type="common">Desulfobacterium autotrophicum</name>
    <dbReference type="NCBI Taxonomy" id="177437"/>
    <lineage>
        <taxon>Bacteria</taxon>
        <taxon>Pseudomonadati</taxon>
        <taxon>Thermodesulfobacteriota</taxon>
        <taxon>Desulfobacteria</taxon>
        <taxon>Desulfobacterales</taxon>
        <taxon>Desulfobacteraceae</taxon>
        <taxon>Desulforapulum</taxon>
    </lineage>
</organism>